<feature type="chain" id="PRO_1000198994" description="Aspartate--tRNA(Asp/Asn) ligase">
    <location>
        <begin position="1"/>
        <end position="605"/>
    </location>
</feature>
<feature type="region of interest" description="Aspartate" evidence="1">
    <location>
        <begin position="207"/>
        <end position="210"/>
    </location>
</feature>
<feature type="binding site" evidence="1">
    <location>
        <position position="183"/>
    </location>
    <ligand>
        <name>L-aspartate</name>
        <dbReference type="ChEBI" id="CHEBI:29991"/>
    </ligand>
</feature>
<feature type="binding site" evidence="1">
    <location>
        <begin position="229"/>
        <end position="231"/>
    </location>
    <ligand>
        <name>ATP</name>
        <dbReference type="ChEBI" id="CHEBI:30616"/>
    </ligand>
</feature>
<feature type="binding site" evidence="1">
    <location>
        <position position="229"/>
    </location>
    <ligand>
        <name>L-aspartate</name>
        <dbReference type="ChEBI" id="CHEBI:29991"/>
    </ligand>
</feature>
<feature type="binding site" evidence="1">
    <location>
        <position position="238"/>
    </location>
    <ligand>
        <name>ATP</name>
        <dbReference type="ChEBI" id="CHEBI:30616"/>
    </ligand>
</feature>
<feature type="binding site" evidence="1">
    <location>
        <position position="456"/>
    </location>
    <ligand>
        <name>L-aspartate</name>
        <dbReference type="ChEBI" id="CHEBI:29991"/>
    </ligand>
</feature>
<feature type="binding site" evidence="1">
    <location>
        <position position="490"/>
    </location>
    <ligand>
        <name>ATP</name>
        <dbReference type="ChEBI" id="CHEBI:30616"/>
    </ligand>
</feature>
<feature type="binding site" evidence="1">
    <location>
        <position position="497"/>
    </location>
    <ligand>
        <name>L-aspartate</name>
        <dbReference type="ChEBI" id="CHEBI:29991"/>
    </ligand>
</feature>
<feature type="binding site" evidence="1">
    <location>
        <begin position="542"/>
        <end position="545"/>
    </location>
    <ligand>
        <name>ATP</name>
        <dbReference type="ChEBI" id="CHEBI:30616"/>
    </ligand>
</feature>
<feature type="site" description="Important for tRNA non-discrimination" evidence="1">
    <location>
        <position position="39"/>
    </location>
</feature>
<feature type="site" description="Important for tRNA non-discrimination" evidence="1">
    <location>
        <position position="91"/>
    </location>
</feature>
<accession>B0TF89</accession>
<sequence length="605" mass="68460">MMIDMFTGLKRSHRGGDLRIDHAGQTVTLMGWVQRRRDHGGLIFVDLRDRSGLVQVVFSPEVGKEAFTKAEDVRNEYVLAVTGDVRPRPEGTVNANLPSGQIDVYARQLWVLNSAKTPPFYIEDGVDVDETVRLKYRYLDLRRPEMQRNLIIRHKTAKAMRDFLDRNGFLEIETPMLTKSTPEGAREFMVPSRIHPGEFFVLPQSPQLYKQILMVAGMERYFQIVRCFRDEDLRADRQPEFTQLDIEMSFTQMDDLLTLMEEMVAHIFKEALGKEISTPFRRIPYAEAMGRFGSDKPDLRFGLELIDLTETVKDVEFKVFASVVKGGGEVKAINAKGCAHFSRKEIDDLTKGVAVYGAKGLAYIQMTEEGPKSPIAKFFTDEQLNAVLDRLGAEKGDLLLFVADKPSVVAASLGFLRQELARRLNLIDSEKLEFAWVVDFPLVEYDPEEKRYNAIHHPFTAPKDEDLDLLDKEPGKVRAKAYDLVLNGVELGGGSLRIYRRDIQEKMFAILGLTAEEAYQKFGFLLDAFDYGTPPHGGIAFGLDRMIMLMTGRDTIRDVIAFPKTQSASDMMVDAPSAVTPRQLKELHIKLDLPVKAPKAEPAKK</sequence>
<gene>
    <name evidence="1" type="primary">aspS</name>
    <name type="ordered locus">Helmi_17810</name>
    <name type="ORF">HM1_1848</name>
</gene>
<dbReference type="EC" id="6.1.1.23" evidence="1"/>
<dbReference type="EMBL" id="CP000930">
    <property type="protein sequence ID" value="ABZ84406.1"/>
    <property type="molecule type" value="Genomic_DNA"/>
</dbReference>
<dbReference type="RefSeq" id="WP_012282910.1">
    <property type="nucleotide sequence ID" value="NC_010337.2"/>
</dbReference>
<dbReference type="SMR" id="B0TF89"/>
<dbReference type="STRING" id="498761.HM1_1848"/>
<dbReference type="KEGG" id="hmo:HM1_1848"/>
<dbReference type="eggNOG" id="COG0173">
    <property type="taxonomic scope" value="Bacteria"/>
</dbReference>
<dbReference type="HOGENOM" id="CLU_014330_3_2_9"/>
<dbReference type="OrthoDB" id="9802326at2"/>
<dbReference type="Proteomes" id="UP000008550">
    <property type="component" value="Chromosome"/>
</dbReference>
<dbReference type="GO" id="GO:0005737">
    <property type="term" value="C:cytoplasm"/>
    <property type="evidence" value="ECO:0007669"/>
    <property type="project" value="UniProtKB-SubCell"/>
</dbReference>
<dbReference type="GO" id="GO:0004815">
    <property type="term" value="F:aspartate-tRNA ligase activity"/>
    <property type="evidence" value="ECO:0007669"/>
    <property type="project" value="UniProtKB-UniRule"/>
</dbReference>
<dbReference type="GO" id="GO:0050560">
    <property type="term" value="F:aspartate-tRNA(Asn) ligase activity"/>
    <property type="evidence" value="ECO:0007669"/>
    <property type="project" value="UniProtKB-EC"/>
</dbReference>
<dbReference type="GO" id="GO:0005524">
    <property type="term" value="F:ATP binding"/>
    <property type="evidence" value="ECO:0007669"/>
    <property type="project" value="UniProtKB-UniRule"/>
</dbReference>
<dbReference type="GO" id="GO:0140096">
    <property type="term" value="F:catalytic activity, acting on a protein"/>
    <property type="evidence" value="ECO:0007669"/>
    <property type="project" value="UniProtKB-ARBA"/>
</dbReference>
<dbReference type="GO" id="GO:0003676">
    <property type="term" value="F:nucleic acid binding"/>
    <property type="evidence" value="ECO:0007669"/>
    <property type="project" value="InterPro"/>
</dbReference>
<dbReference type="GO" id="GO:0016740">
    <property type="term" value="F:transferase activity"/>
    <property type="evidence" value="ECO:0007669"/>
    <property type="project" value="UniProtKB-ARBA"/>
</dbReference>
<dbReference type="GO" id="GO:0006422">
    <property type="term" value="P:aspartyl-tRNA aminoacylation"/>
    <property type="evidence" value="ECO:0007669"/>
    <property type="project" value="UniProtKB-UniRule"/>
</dbReference>
<dbReference type="CDD" id="cd00777">
    <property type="entry name" value="AspRS_core"/>
    <property type="match status" value="1"/>
</dbReference>
<dbReference type="CDD" id="cd04317">
    <property type="entry name" value="EcAspRS_like_N"/>
    <property type="match status" value="1"/>
</dbReference>
<dbReference type="Gene3D" id="3.30.930.10">
    <property type="entry name" value="Bira Bifunctional Protein, Domain 2"/>
    <property type="match status" value="1"/>
</dbReference>
<dbReference type="Gene3D" id="3.30.1360.30">
    <property type="entry name" value="GAD-like domain"/>
    <property type="match status" value="1"/>
</dbReference>
<dbReference type="Gene3D" id="2.40.50.140">
    <property type="entry name" value="Nucleic acid-binding proteins"/>
    <property type="match status" value="1"/>
</dbReference>
<dbReference type="HAMAP" id="MF_00044">
    <property type="entry name" value="Asp_tRNA_synth_type1"/>
    <property type="match status" value="1"/>
</dbReference>
<dbReference type="InterPro" id="IPR004364">
    <property type="entry name" value="Aa-tRNA-synt_II"/>
</dbReference>
<dbReference type="InterPro" id="IPR006195">
    <property type="entry name" value="aa-tRNA-synth_II"/>
</dbReference>
<dbReference type="InterPro" id="IPR045864">
    <property type="entry name" value="aa-tRNA-synth_II/BPL/LPL"/>
</dbReference>
<dbReference type="InterPro" id="IPR004524">
    <property type="entry name" value="Asp-tRNA-ligase_1"/>
</dbReference>
<dbReference type="InterPro" id="IPR047089">
    <property type="entry name" value="Asp-tRNA-ligase_1_N"/>
</dbReference>
<dbReference type="InterPro" id="IPR002312">
    <property type="entry name" value="Asp/Asn-tRNA-synth_IIb"/>
</dbReference>
<dbReference type="InterPro" id="IPR047090">
    <property type="entry name" value="AspRS_core"/>
</dbReference>
<dbReference type="InterPro" id="IPR004115">
    <property type="entry name" value="GAD-like_sf"/>
</dbReference>
<dbReference type="InterPro" id="IPR029351">
    <property type="entry name" value="GAD_dom"/>
</dbReference>
<dbReference type="InterPro" id="IPR012340">
    <property type="entry name" value="NA-bd_OB-fold"/>
</dbReference>
<dbReference type="InterPro" id="IPR004365">
    <property type="entry name" value="NA-bd_OB_tRNA"/>
</dbReference>
<dbReference type="NCBIfam" id="TIGR00459">
    <property type="entry name" value="aspS_bact"/>
    <property type="match status" value="1"/>
</dbReference>
<dbReference type="NCBIfam" id="NF001750">
    <property type="entry name" value="PRK00476.1"/>
    <property type="match status" value="1"/>
</dbReference>
<dbReference type="PANTHER" id="PTHR22594:SF5">
    <property type="entry name" value="ASPARTATE--TRNA LIGASE, MITOCHONDRIAL"/>
    <property type="match status" value="1"/>
</dbReference>
<dbReference type="PANTHER" id="PTHR22594">
    <property type="entry name" value="ASPARTYL/LYSYL-TRNA SYNTHETASE"/>
    <property type="match status" value="1"/>
</dbReference>
<dbReference type="Pfam" id="PF02938">
    <property type="entry name" value="GAD"/>
    <property type="match status" value="1"/>
</dbReference>
<dbReference type="Pfam" id="PF00152">
    <property type="entry name" value="tRNA-synt_2"/>
    <property type="match status" value="1"/>
</dbReference>
<dbReference type="Pfam" id="PF01336">
    <property type="entry name" value="tRNA_anti-codon"/>
    <property type="match status" value="1"/>
</dbReference>
<dbReference type="PRINTS" id="PR01042">
    <property type="entry name" value="TRNASYNTHASP"/>
</dbReference>
<dbReference type="SUPFAM" id="SSF55681">
    <property type="entry name" value="Class II aaRS and biotin synthetases"/>
    <property type="match status" value="1"/>
</dbReference>
<dbReference type="SUPFAM" id="SSF55261">
    <property type="entry name" value="GAD domain-like"/>
    <property type="match status" value="1"/>
</dbReference>
<dbReference type="SUPFAM" id="SSF50249">
    <property type="entry name" value="Nucleic acid-binding proteins"/>
    <property type="match status" value="1"/>
</dbReference>
<dbReference type="PROSITE" id="PS50862">
    <property type="entry name" value="AA_TRNA_LIGASE_II"/>
    <property type="match status" value="1"/>
</dbReference>
<protein>
    <recommendedName>
        <fullName evidence="1">Aspartate--tRNA(Asp/Asn) ligase</fullName>
        <ecNumber evidence="1">6.1.1.23</ecNumber>
    </recommendedName>
    <alternativeName>
        <fullName evidence="1">Aspartyl-tRNA synthetase</fullName>
        <shortName evidence="1">AspRS</shortName>
    </alternativeName>
    <alternativeName>
        <fullName evidence="1">Non-discriminating aspartyl-tRNA synthetase</fullName>
        <shortName evidence="1">ND-AspRS</shortName>
    </alternativeName>
</protein>
<comment type="function">
    <text evidence="1">Aspartyl-tRNA synthetase with relaxed tRNA specificity since it is able to aspartylate not only its cognate tRNA(Asp) but also tRNA(Asn). Reaction proceeds in two steps: L-aspartate is first activated by ATP to form Asp-AMP and then transferred to the acceptor end of tRNA(Asp/Asn).</text>
</comment>
<comment type="catalytic activity">
    <reaction evidence="1">
        <text>tRNA(Asx) + L-aspartate + ATP = L-aspartyl-tRNA(Asx) + AMP + diphosphate</text>
        <dbReference type="Rhea" id="RHEA:18349"/>
        <dbReference type="Rhea" id="RHEA-COMP:9710"/>
        <dbReference type="Rhea" id="RHEA-COMP:9711"/>
        <dbReference type="ChEBI" id="CHEBI:29991"/>
        <dbReference type="ChEBI" id="CHEBI:30616"/>
        <dbReference type="ChEBI" id="CHEBI:33019"/>
        <dbReference type="ChEBI" id="CHEBI:78442"/>
        <dbReference type="ChEBI" id="CHEBI:78516"/>
        <dbReference type="ChEBI" id="CHEBI:456215"/>
        <dbReference type="EC" id="6.1.1.23"/>
    </reaction>
</comment>
<comment type="subunit">
    <text evidence="1">Homodimer.</text>
</comment>
<comment type="subcellular location">
    <subcellularLocation>
        <location evidence="1">Cytoplasm</location>
    </subcellularLocation>
</comment>
<comment type="similarity">
    <text evidence="1">Belongs to the class-II aminoacyl-tRNA synthetase family. Type 1 subfamily.</text>
</comment>
<organism>
    <name type="scientific">Heliobacterium modesticaldum (strain ATCC 51547 / Ice1)</name>
    <dbReference type="NCBI Taxonomy" id="498761"/>
    <lineage>
        <taxon>Bacteria</taxon>
        <taxon>Bacillati</taxon>
        <taxon>Bacillota</taxon>
        <taxon>Clostridia</taxon>
        <taxon>Eubacteriales</taxon>
        <taxon>Heliobacteriaceae</taxon>
        <taxon>Heliomicrobium</taxon>
    </lineage>
</organism>
<proteinExistence type="inferred from homology"/>
<evidence type="ECO:0000255" key="1">
    <source>
        <dbReference type="HAMAP-Rule" id="MF_00044"/>
    </source>
</evidence>
<name>SYDND_HELMI</name>
<reference key="1">
    <citation type="journal article" date="2008" name="J. Bacteriol.">
        <title>The genome of Heliobacterium modesticaldum, a phototrophic representative of the Firmicutes containing the simplest photosynthetic apparatus.</title>
        <authorList>
            <person name="Sattley W.M."/>
            <person name="Madigan M.T."/>
            <person name="Swingley W.D."/>
            <person name="Cheung P.C."/>
            <person name="Clocksin K.M."/>
            <person name="Conrad A.L."/>
            <person name="Dejesa L.C."/>
            <person name="Honchak B.M."/>
            <person name="Jung D.O."/>
            <person name="Karbach L.E."/>
            <person name="Kurdoglu A."/>
            <person name="Lahiri S."/>
            <person name="Mastrian S.D."/>
            <person name="Page L.E."/>
            <person name="Taylor H.L."/>
            <person name="Wang Z.T."/>
            <person name="Raymond J."/>
            <person name="Chen M."/>
            <person name="Blankenship R.E."/>
            <person name="Touchman J.W."/>
        </authorList>
    </citation>
    <scope>NUCLEOTIDE SEQUENCE [LARGE SCALE GENOMIC DNA]</scope>
    <source>
        <strain>ATCC 51547 / Ice1</strain>
    </source>
</reference>
<keyword id="KW-0030">Aminoacyl-tRNA synthetase</keyword>
<keyword id="KW-0067">ATP-binding</keyword>
<keyword id="KW-0963">Cytoplasm</keyword>
<keyword id="KW-0436">Ligase</keyword>
<keyword id="KW-0547">Nucleotide-binding</keyword>
<keyword id="KW-0648">Protein biosynthesis</keyword>
<keyword id="KW-1185">Reference proteome</keyword>